<feature type="chain" id="PRO_0000135589" description="Nascent polypeptide-associated complex subunit alpha-like protein 3">
    <location>
        <begin position="1"/>
        <end position="204"/>
    </location>
</feature>
<feature type="domain" description="NAC-A/B" evidence="2">
    <location>
        <begin position="56"/>
        <end position="121"/>
    </location>
</feature>
<feature type="domain" description="UBA">
    <location>
        <begin position="159"/>
        <end position="204"/>
    </location>
</feature>
<feature type="region of interest" description="Disordered" evidence="3">
    <location>
        <begin position="1"/>
        <end position="68"/>
    </location>
</feature>
<feature type="region of interest" description="Disordered" evidence="3">
    <location>
        <begin position="141"/>
        <end position="165"/>
    </location>
</feature>
<feature type="compositionally biased region" description="Basic and acidic residues" evidence="3">
    <location>
        <begin position="1"/>
        <end position="23"/>
    </location>
</feature>
<feature type="compositionally biased region" description="Acidic residues" evidence="3">
    <location>
        <begin position="24"/>
        <end position="43"/>
    </location>
</feature>
<feature type="compositionally biased region" description="Basic and acidic residues" evidence="3">
    <location>
        <begin position="44"/>
        <end position="59"/>
    </location>
</feature>
<feature type="compositionally biased region" description="Low complexity" evidence="3">
    <location>
        <begin position="141"/>
        <end position="152"/>
    </location>
</feature>
<feature type="compositionally biased region" description="Acidic residues" evidence="3">
    <location>
        <begin position="153"/>
        <end position="164"/>
    </location>
</feature>
<feature type="modified residue" description="Phosphoserine" evidence="5">
    <location>
        <position position="36"/>
    </location>
</feature>
<comment type="function">
    <text evidence="1">May promote appropriate targeting of ribosome-nascent polypeptide complexes.</text>
</comment>
<comment type="similarity">
    <text evidence="4">Belongs to the NAC-alpha family.</text>
</comment>
<comment type="sequence caution" evidence="4">
    <conflict type="frameshift">
        <sequence resource="EMBL-CDS" id="BAB11113"/>
    </conflict>
</comment>
<gene>
    <name type="ordered locus">At5g13850</name>
    <name type="ORF">MAC12.19</name>
</gene>
<keyword id="KW-0597">Phosphoprotein</keyword>
<keyword id="KW-0653">Protein transport</keyword>
<keyword id="KW-1185">Reference proteome</keyword>
<keyword id="KW-0813">Transport</keyword>
<proteinExistence type="evidence at protein level"/>
<sequence length="204" mass="22057">MTAEQKVELAAKLEEQKIDLDKPEVEDDDDNDEDDSEDDDEAEGHDGEAGGRSKQSRSEKKSRKAMLKLGMKPITGVSRVTVKKSKNILFVISKPDVFKSPASDTYVIFGEAKIEDLSSQLQSQAAEQFKAPNLSNVISQGETSSAATAAAVQDDDDEEVDEEGVEPKDIELVMTQAGVSKPRAVKALKLANGDIVSAIMELTT</sequence>
<dbReference type="EMBL" id="AB005230">
    <property type="protein sequence ID" value="BAB11113.1"/>
    <property type="status" value="ALT_FRAME"/>
    <property type="molecule type" value="Genomic_DNA"/>
</dbReference>
<dbReference type="EMBL" id="CP002688">
    <property type="protein sequence ID" value="AED91950.1"/>
    <property type="molecule type" value="Genomic_DNA"/>
</dbReference>
<dbReference type="EMBL" id="BT014875">
    <property type="protein sequence ID" value="AAT41858.1"/>
    <property type="molecule type" value="mRNA"/>
</dbReference>
<dbReference type="RefSeq" id="NP_196889.4">
    <property type="nucleotide sequence ID" value="NM_121388.9"/>
</dbReference>
<dbReference type="SMR" id="Q6ICZ8"/>
<dbReference type="BioGRID" id="16509">
    <property type="interactions" value="11"/>
</dbReference>
<dbReference type="FunCoup" id="Q6ICZ8">
    <property type="interactions" value="3135"/>
</dbReference>
<dbReference type="IntAct" id="Q6ICZ8">
    <property type="interactions" value="1"/>
</dbReference>
<dbReference type="STRING" id="3702.Q6ICZ8"/>
<dbReference type="iPTMnet" id="Q6ICZ8"/>
<dbReference type="MetOSite" id="Q6ICZ8"/>
<dbReference type="PaxDb" id="3702-AT5G13850.1"/>
<dbReference type="ProteomicsDB" id="251223"/>
<dbReference type="EnsemblPlants" id="AT5G13850.1">
    <property type="protein sequence ID" value="AT5G13850.1"/>
    <property type="gene ID" value="AT5G13850"/>
</dbReference>
<dbReference type="GeneID" id="831231"/>
<dbReference type="Gramene" id="AT5G13850.1">
    <property type="protein sequence ID" value="AT5G13850.1"/>
    <property type="gene ID" value="AT5G13850"/>
</dbReference>
<dbReference type="KEGG" id="ath:AT5G13850"/>
<dbReference type="Araport" id="AT5G13850"/>
<dbReference type="TAIR" id="AT5G13850">
    <property type="gene designation" value="NACA3"/>
</dbReference>
<dbReference type="eggNOG" id="KOG2239">
    <property type="taxonomic scope" value="Eukaryota"/>
</dbReference>
<dbReference type="HOGENOM" id="CLU_057806_3_0_1"/>
<dbReference type="InParanoid" id="Q6ICZ8"/>
<dbReference type="OMA" id="MKPIPMV"/>
<dbReference type="OrthoDB" id="3169036at2759"/>
<dbReference type="PhylomeDB" id="Q6ICZ8"/>
<dbReference type="CD-CODE" id="4299E36E">
    <property type="entry name" value="Nucleolus"/>
</dbReference>
<dbReference type="PRO" id="PR:Q6ICZ8"/>
<dbReference type="Proteomes" id="UP000006548">
    <property type="component" value="Chromosome 5"/>
</dbReference>
<dbReference type="ExpressionAtlas" id="Q6ICZ8">
    <property type="expression patterns" value="baseline and differential"/>
</dbReference>
<dbReference type="GO" id="GO:0005829">
    <property type="term" value="C:cytosol"/>
    <property type="evidence" value="ECO:0007005"/>
    <property type="project" value="TAIR"/>
</dbReference>
<dbReference type="GO" id="GO:0022626">
    <property type="term" value="C:cytosolic ribosome"/>
    <property type="evidence" value="ECO:0007005"/>
    <property type="project" value="TAIR"/>
</dbReference>
<dbReference type="GO" id="GO:0005794">
    <property type="term" value="C:Golgi apparatus"/>
    <property type="evidence" value="ECO:0007005"/>
    <property type="project" value="TAIR"/>
</dbReference>
<dbReference type="GO" id="GO:0005854">
    <property type="term" value="C:nascent polypeptide-associated complex"/>
    <property type="evidence" value="ECO:0007669"/>
    <property type="project" value="InterPro"/>
</dbReference>
<dbReference type="GO" id="GO:0009506">
    <property type="term" value="C:plasmodesma"/>
    <property type="evidence" value="ECO:0007005"/>
    <property type="project" value="TAIR"/>
</dbReference>
<dbReference type="GO" id="GO:0009536">
    <property type="term" value="C:plastid"/>
    <property type="evidence" value="ECO:0007005"/>
    <property type="project" value="TAIR"/>
</dbReference>
<dbReference type="GO" id="GO:0015031">
    <property type="term" value="P:protein transport"/>
    <property type="evidence" value="ECO:0007669"/>
    <property type="project" value="UniProtKB-KW"/>
</dbReference>
<dbReference type="CDD" id="cd22054">
    <property type="entry name" value="NAC_NACA"/>
    <property type="match status" value="1"/>
</dbReference>
<dbReference type="CDD" id="cd14358">
    <property type="entry name" value="UBA_NAC_euk"/>
    <property type="match status" value="1"/>
</dbReference>
<dbReference type="FunFam" id="2.20.70.30:FF:000002">
    <property type="entry name" value="Nascent polypeptide-associated complex (NAC), alpha subunit"/>
    <property type="match status" value="1"/>
</dbReference>
<dbReference type="FunFam" id="1.10.8.10:FF:000006">
    <property type="entry name" value="Putative nascent polypeptide-associated complex subunit alpha"/>
    <property type="match status" value="1"/>
</dbReference>
<dbReference type="Gene3D" id="1.10.8.10">
    <property type="entry name" value="DNA helicase RuvA subunit, C-terminal domain"/>
    <property type="match status" value="1"/>
</dbReference>
<dbReference type="Gene3D" id="2.20.70.30">
    <property type="entry name" value="Nascent polypeptide-associated complex domain"/>
    <property type="match status" value="1"/>
</dbReference>
<dbReference type="InterPro" id="IPR016641">
    <property type="entry name" value="EGD2/NACA0like"/>
</dbReference>
<dbReference type="InterPro" id="IPR044034">
    <property type="entry name" value="NAC-like_UBA"/>
</dbReference>
<dbReference type="InterPro" id="IPR038187">
    <property type="entry name" value="NAC_A/B_dom_sf"/>
</dbReference>
<dbReference type="InterPro" id="IPR002715">
    <property type="entry name" value="Nas_poly-pep-assoc_cplx_dom"/>
</dbReference>
<dbReference type="PANTHER" id="PTHR21713">
    <property type="entry name" value="NASCENT POLYPEPTIDE ASSOCIATED COMPLEX ALPHA SUBUNIT-RELATED"/>
    <property type="match status" value="1"/>
</dbReference>
<dbReference type="Pfam" id="PF01849">
    <property type="entry name" value="NAC"/>
    <property type="match status" value="1"/>
</dbReference>
<dbReference type="Pfam" id="PF19026">
    <property type="entry name" value="UBA_HYPK"/>
    <property type="match status" value="1"/>
</dbReference>
<dbReference type="PIRSF" id="PIRSF015901">
    <property type="entry name" value="NAC_alpha"/>
    <property type="match status" value="1"/>
</dbReference>
<dbReference type="SMART" id="SM01407">
    <property type="entry name" value="NAC"/>
    <property type="match status" value="1"/>
</dbReference>
<dbReference type="PROSITE" id="PS51151">
    <property type="entry name" value="NAC_AB"/>
    <property type="match status" value="1"/>
</dbReference>
<reference key="1">
    <citation type="journal article" date="1997" name="DNA Res.">
        <title>Structural analysis of Arabidopsis thaliana chromosome 5. I. Sequence features of the 1.6 Mb regions covered by twenty physically assigned P1 clones.</title>
        <authorList>
            <person name="Sato S."/>
            <person name="Kotani H."/>
            <person name="Nakamura Y."/>
            <person name="Kaneko T."/>
            <person name="Asamizu E."/>
            <person name="Fukami M."/>
            <person name="Miyajima N."/>
            <person name="Tabata S."/>
        </authorList>
    </citation>
    <scope>NUCLEOTIDE SEQUENCE [LARGE SCALE GENOMIC DNA]</scope>
    <source>
        <strain>cv. Columbia</strain>
    </source>
</reference>
<reference key="2">
    <citation type="journal article" date="2017" name="Plant J.">
        <title>Araport11: a complete reannotation of the Arabidopsis thaliana reference genome.</title>
        <authorList>
            <person name="Cheng C.Y."/>
            <person name="Krishnakumar V."/>
            <person name="Chan A.P."/>
            <person name="Thibaud-Nissen F."/>
            <person name="Schobel S."/>
            <person name="Town C.D."/>
        </authorList>
    </citation>
    <scope>GENOME REANNOTATION</scope>
    <source>
        <strain>cv. Columbia</strain>
    </source>
</reference>
<reference key="3">
    <citation type="submission" date="2004-06" db="EMBL/GenBank/DDBJ databases">
        <title>Arabidopsis ORF clones.</title>
        <authorList>
            <person name="Cheuk R.F."/>
            <person name="Chen H."/>
            <person name="Kim C.J."/>
            <person name="Shinn P."/>
            <person name="Ecker J.R."/>
        </authorList>
    </citation>
    <scope>NUCLEOTIDE SEQUENCE [LARGE SCALE MRNA]</scope>
    <source>
        <strain>cv. Columbia</strain>
    </source>
</reference>
<reference key="4">
    <citation type="journal article" date="2009" name="Plant Physiol.">
        <title>Large-scale Arabidopsis phosphoproteome profiling reveals novel chloroplast kinase substrates and phosphorylation networks.</title>
        <authorList>
            <person name="Reiland S."/>
            <person name="Messerli G."/>
            <person name="Baerenfaller K."/>
            <person name="Gerrits B."/>
            <person name="Endler A."/>
            <person name="Grossmann J."/>
            <person name="Gruissem W."/>
            <person name="Baginsky S."/>
        </authorList>
    </citation>
    <scope>PHOSPHORYLATION [LARGE SCALE ANALYSIS] AT SER-36</scope>
    <scope>IDENTIFICATION BY MASS SPECTROMETRY [LARGE SCALE ANALYSIS]</scope>
</reference>
<organism>
    <name type="scientific">Arabidopsis thaliana</name>
    <name type="common">Mouse-ear cress</name>
    <dbReference type="NCBI Taxonomy" id="3702"/>
    <lineage>
        <taxon>Eukaryota</taxon>
        <taxon>Viridiplantae</taxon>
        <taxon>Streptophyta</taxon>
        <taxon>Embryophyta</taxon>
        <taxon>Tracheophyta</taxon>
        <taxon>Spermatophyta</taxon>
        <taxon>Magnoliopsida</taxon>
        <taxon>eudicotyledons</taxon>
        <taxon>Gunneridae</taxon>
        <taxon>Pentapetalae</taxon>
        <taxon>rosids</taxon>
        <taxon>malvids</taxon>
        <taxon>Brassicales</taxon>
        <taxon>Brassicaceae</taxon>
        <taxon>Camelineae</taxon>
        <taxon>Arabidopsis</taxon>
    </lineage>
</organism>
<accession>Q6ICZ8</accession>
<accession>Q9FFY7</accession>
<evidence type="ECO:0000250" key="1"/>
<evidence type="ECO:0000255" key="2">
    <source>
        <dbReference type="PROSITE-ProRule" id="PRU00507"/>
    </source>
</evidence>
<evidence type="ECO:0000256" key="3">
    <source>
        <dbReference type="SAM" id="MobiDB-lite"/>
    </source>
</evidence>
<evidence type="ECO:0000305" key="4"/>
<evidence type="ECO:0007744" key="5">
    <source>
    </source>
</evidence>
<name>NACA3_ARATH</name>
<protein>
    <recommendedName>
        <fullName>Nascent polypeptide-associated complex subunit alpha-like protein 3</fullName>
        <shortName>NAC-alpha-like protein 3</shortName>
    </recommendedName>
    <alternativeName>
        <fullName>Alpha-NAC-like protein 3</fullName>
    </alternativeName>
</protein>